<name>PLSB_MYCBT</name>
<protein>
    <recommendedName>
        <fullName evidence="1">Glycerol-3-phosphate acyltransferase</fullName>
        <shortName evidence="1">GPAT</shortName>
        <ecNumber evidence="1">2.3.1.15</ecNumber>
    </recommendedName>
</protein>
<accession>C1AEU7</accession>
<comment type="catalytic activity">
    <reaction evidence="1">
        <text>sn-glycerol 3-phosphate + an acyl-CoA = a 1-acyl-sn-glycero-3-phosphate + CoA</text>
        <dbReference type="Rhea" id="RHEA:15325"/>
        <dbReference type="ChEBI" id="CHEBI:57287"/>
        <dbReference type="ChEBI" id="CHEBI:57597"/>
        <dbReference type="ChEBI" id="CHEBI:57970"/>
        <dbReference type="ChEBI" id="CHEBI:58342"/>
        <dbReference type="EC" id="2.3.1.15"/>
    </reaction>
</comment>
<comment type="pathway">
    <text evidence="1">Phospholipid metabolism; CDP-diacylglycerol biosynthesis; CDP-diacylglycerol from sn-glycerol 3-phosphate: step 1/3.</text>
</comment>
<comment type="subcellular location">
    <subcellularLocation>
        <location evidence="1">Cell membrane</location>
        <topology evidence="1">Peripheral membrane protein</topology>
        <orientation evidence="1">Cytoplasmic side</orientation>
    </subcellularLocation>
</comment>
<comment type="domain">
    <text evidence="1">The HXXXXD motif is essential for acyltransferase activity and may constitute the binding site for the phosphate moiety of the glycerol-3-phosphate.</text>
</comment>
<comment type="similarity">
    <text evidence="1">Belongs to the GPAT/DAPAT family.</text>
</comment>
<keyword id="KW-0012">Acyltransferase</keyword>
<keyword id="KW-1003">Cell membrane</keyword>
<keyword id="KW-0444">Lipid biosynthesis</keyword>
<keyword id="KW-0443">Lipid metabolism</keyword>
<keyword id="KW-0472">Membrane</keyword>
<keyword id="KW-0594">Phospholipid biosynthesis</keyword>
<keyword id="KW-1208">Phospholipid metabolism</keyword>
<keyword id="KW-0808">Transferase</keyword>
<evidence type="ECO:0000255" key="1">
    <source>
        <dbReference type="HAMAP-Rule" id="MF_00393"/>
    </source>
</evidence>
<organism>
    <name type="scientific">Mycobacterium bovis (strain BCG / Tokyo 172 / ATCC 35737 / TMC 1019)</name>
    <dbReference type="NCBI Taxonomy" id="561275"/>
    <lineage>
        <taxon>Bacteria</taxon>
        <taxon>Bacillati</taxon>
        <taxon>Actinomycetota</taxon>
        <taxon>Actinomycetes</taxon>
        <taxon>Mycobacteriales</taxon>
        <taxon>Mycobacteriaceae</taxon>
        <taxon>Mycobacterium</taxon>
        <taxon>Mycobacterium tuberculosis complex</taxon>
    </lineage>
</organism>
<feature type="chain" id="PRO_1000192406" description="Glycerol-3-phosphate acyltransferase">
    <location>
        <begin position="1"/>
        <end position="789"/>
    </location>
</feature>
<feature type="short sequence motif" description="HXXXXD motif">
    <location>
        <begin position="275"/>
        <end position="280"/>
    </location>
</feature>
<reference key="1">
    <citation type="journal article" date="2009" name="Vaccine">
        <title>Whole genome sequence analysis of Mycobacterium bovis bacillus Calmette-Guerin (BCG) Tokyo 172: a comparative study of BCG vaccine substrains.</title>
        <authorList>
            <person name="Seki M."/>
            <person name="Honda I."/>
            <person name="Fujita I."/>
            <person name="Yano I."/>
            <person name="Yamamoto S."/>
            <person name="Koyama A."/>
        </authorList>
    </citation>
    <scope>NUCLEOTIDE SEQUENCE [LARGE SCALE GENOMIC DNA]</scope>
    <source>
        <strain>BCG / Tokyo 172 / ATCC 35737 / TMC 1019</strain>
    </source>
</reference>
<gene>
    <name evidence="1" type="primary">plsB</name>
    <name type="ordered locus">JTY_2494</name>
</gene>
<dbReference type="EC" id="2.3.1.15" evidence="1"/>
<dbReference type="EMBL" id="AP010918">
    <property type="protein sequence ID" value="BAH26776.1"/>
    <property type="molecule type" value="Genomic_DNA"/>
</dbReference>
<dbReference type="RefSeq" id="WP_003901413.1">
    <property type="nucleotide sequence ID" value="NZ_CP014566.1"/>
</dbReference>
<dbReference type="SMR" id="C1AEU7"/>
<dbReference type="KEGG" id="mbt:JTY_2494"/>
<dbReference type="HOGENOM" id="CLU_015407_1_0_11"/>
<dbReference type="UniPathway" id="UPA00557">
    <property type="reaction ID" value="UER00612"/>
</dbReference>
<dbReference type="GO" id="GO:0005886">
    <property type="term" value="C:plasma membrane"/>
    <property type="evidence" value="ECO:0007669"/>
    <property type="project" value="UniProtKB-SubCell"/>
</dbReference>
<dbReference type="GO" id="GO:0004366">
    <property type="term" value="F:glycerol-3-phosphate O-acyltransferase activity"/>
    <property type="evidence" value="ECO:0007669"/>
    <property type="project" value="UniProtKB-UniRule"/>
</dbReference>
<dbReference type="GO" id="GO:0016024">
    <property type="term" value="P:CDP-diacylglycerol biosynthetic process"/>
    <property type="evidence" value="ECO:0007669"/>
    <property type="project" value="UniProtKB-UniRule"/>
</dbReference>
<dbReference type="CDD" id="cd07993">
    <property type="entry name" value="LPLAT_DHAPAT-like"/>
    <property type="match status" value="1"/>
</dbReference>
<dbReference type="HAMAP" id="MF_00393">
    <property type="entry name" value="Glyc3P_acyltrans"/>
    <property type="match status" value="1"/>
</dbReference>
<dbReference type="InterPro" id="IPR022284">
    <property type="entry name" value="GPAT/DHAPAT"/>
</dbReference>
<dbReference type="InterPro" id="IPR045520">
    <property type="entry name" value="GPAT/DHAPAT_C"/>
</dbReference>
<dbReference type="InterPro" id="IPR041728">
    <property type="entry name" value="GPAT/DHAPAT_LPLAT"/>
</dbReference>
<dbReference type="InterPro" id="IPR028354">
    <property type="entry name" value="GPAT_PlsB"/>
</dbReference>
<dbReference type="InterPro" id="IPR002123">
    <property type="entry name" value="Plipid/glycerol_acylTrfase"/>
</dbReference>
<dbReference type="NCBIfam" id="NF002886">
    <property type="entry name" value="PRK03355.1"/>
    <property type="match status" value="1"/>
</dbReference>
<dbReference type="PANTHER" id="PTHR12563:SF17">
    <property type="entry name" value="DIHYDROXYACETONE PHOSPHATE ACYLTRANSFERASE"/>
    <property type="match status" value="1"/>
</dbReference>
<dbReference type="PANTHER" id="PTHR12563">
    <property type="entry name" value="GLYCEROL-3-PHOSPHATE ACYLTRANSFERASE"/>
    <property type="match status" value="1"/>
</dbReference>
<dbReference type="Pfam" id="PF01553">
    <property type="entry name" value="Acyltransferase"/>
    <property type="match status" value="1"/>
</dbReference>
<dbReference type="Pfam" id="PF19277">
    <property type="entry name" value="GPAT_C"/>
    <property type="match status" value="1"/>
</dbReference>
<dbReference type="PIRSF" id="PIRSF500064">
    <property type="entry name" value="GPAT"/>
    <property type="match status" value="1"/>
</dbReference>
<dbReference type="PIRSF" id="PIRSF000437">
    <property type="entry name" value="GPAT_DHAPAT"/>
    <property type="match status" value="1"/>
</dbReference>
<dbReference type="SMART" id="SM00563">
    <property type="entry name" value="PlsC"/>
    <property type="match status" value="1"/>
</dbReference>
<dbReference type="SUPFAM" id="SSF69593">
    <property type="entry name" value="Glycerol-3-phosphate (1)-acyltransferase"/>
    <property type="match status" value="1"/>
</dbReference>
<proteinExistence type="inferred from homology"/>
<sequence length="789" mass="88368">MTKPAADASAVLTAEDTLVLASTATPVEMELIMGWLGQQRARHPDSKFDILKLPPRNAPPAALTALVEQLEPGFASSPQSGEDRSIVPVRVIWLPPADRSRAGKVAALLPGRDPYHPSQRQQRRILRTDPRRARVVAGESAKVSELRQQWRDTTVAEHKRDFAQFVSRRALLALARAEYRILGPQYKSPRLVKPEMLASARFRAGLDRIPGATVEDAGKMLDELSTGWSQVSVDLVSVLGRLASRGFDPEFDYDEYQVAAMRAALEAHPAVLLFSHRSYIDGVVVPVAMQDNRLPPVHMFGGINLSFGLMGPLMRRSGMIFIRRNIGNDPLYKYVLKEYVGYVVEKRFNLSWSIEGTRSRTGKMLPPKLGLMSYVADAYLDGRSDDILLQGVSICFDQLHEITEYAAYARGAEKTPEGLRWLYNFIKAQGERNFGKIYVRFPEAVSMRQYLGAPHGELTQDPAAKRLALQKMSFEVAWRILQATPVTATGLVSALLLTTRGTALTLDQLHHTLQDSLDYLERKQSPVSTSALRLRSREGVRAAADALSNGHPVTRVDSGREPVWYIAPDDEHAAAFYRNSVIHAFLETSIVELALAHAKHAEGDRVAAFWAQAMRLRDLLKFDFYFADSTAFRANIAQEMAWHQDWEDHLGVGGNEIDAMLYAKRPLMSDAMLRVFFEAYEIVADVLRDAPPDIGPEELTELALGLGRQFVAQGRVRSSEPVSTLLFATARQVAVDQELIAPAADLAERRVAFRRELRNILRDFDYVEQIARNQFVAREFKARQGRDRI</sequence>